<gene>
    <name evidence="1" type="primary">fmt</name>
    <name type="ordered locus">CCNA_00281</name>
</gene>
<name>FMT_CAUVN</name>
<protein>
    <recommendedName>
        <fullName evidence="1">Methionyl-tRNA formyltransferase</fullName>
        <ecNumber evidence="1">2.1.2.9</ecNumber>
    </recommendedName>
</protein>
<proteinExistence type="inferred from homology"/>
<keyword id="KW-0648">Protein biosynthesis</keyword>
<keyword id="KW-1185">Reference proteome</keyword>
<keyword id="KW-0808">Transferase</keyword>
<dbReference type="EC" id="2.1.2.9" evidence="1"/>
<dbReference type="EMBL" id="CP001340">
    <property type="protein sequence ID" value="ACL93748.1"/>
    <property type="molecule type" value="Genomic_DNA"/>
</dbReference>
<dbReference type="RefSeq" id="WP_010918168.1">
    <property type="nucleotide sequence ID" value="NC_011916.1"/>
</dbReference>
<dbReference type="RefSeq" id="YP_002515656.1">
    <property type="nucleotide sequence ID" value="NC_011916.1"/>
</dbReference>
<dbReference type="SMR" id="B8GYF1"/>
<dbReference type="GeneID" id="7330734"/>
<dbReference type="KEGG" id="ccs:CCNA_00281"/>
<dbReference type="PATRIC" id="fig|565050.3.peg.278"/>
<dbReference type="HOGENOM" id="CLU_033347_1_2_5"/>
<dbReference type="OrthoDB" id="9802815at2"/>
<dbReference type="PhylomeDB" id="B8GYF1"/>
<dbReference type="Proteomes" id="UP000001364">
    <property type="component" value="Chromosome"/>
</dbReference>
<dbReference type="GO" id="GO:0005829">
    <property type="term" value="C:cytosol"/>
    <property type="evidence" value="ECO:0007669"/>
    <property type="project" value="TreeGrafter"/>
</dbReference>
<dbReference type="GO" id="GO:0004479">
    <property type="term" value="F:methionyl-tRNA formyltransferase activity"/>
    <property type="evidence" value="ECO:0007669"/>
    <property type="project" value="UniProtKB-UniRule"/>
</dbReference>
<dbReference type="CDD" id="cd08646">
    <property type="entry name" value="FMT_core_Met-tRNA-FMT_N"/>
    <property type="match status" value="1"/>
</dbReference>
<dbReference type="CDD" id="cd08704">
    <property type="entry name" value="Met_tRNA_FMT_C"/>
    <property type="match status" value="1"/>
</dbReference>
<dbReference type="Gene3D" id="3.40.50.12230">
    <property type="match status" value="1"/>
</dbReference>
<dbReference type="HAMAP" id="MF_00182">
    <property type="entry name" value="Formyl_trans"/>
    <property type="match status" value="1"/>
</dbReference>
<dbReference type="InterPro" id="IPR005794">
    <property type="entry name" value="Fmt"/>
</dbReference>
<dbReference type="InterPro" id="IPR005793">
    <property type="entry name" value="Formyl_trans_C"/>
</dbReference>
<dbReference type="InterPro" id="IPR002376">
    <property type="entry name" value="Formyl_transf_N"/>
</dbReference>
<dbReference type="InterPro" id="IPR036477">
    <property type="entry name" value="Formyl_transf_N_sf"/>
</dbReference>
<dbReference type="InterPro" id="IPR011034">
    <property type="entry name" value="Formyl_transferase-like_C_sf"/>
</dbReference>
<dbReference type="InterPro" id="IPR044135">
    <property type="entry name" value="Met-tRNA-FMT_C"/>
</dbReference>
<dbReference type="InterPro" id="IPR041711">
    <property type="entry name" value="Met-tRNA-FMT_N"/>
</dbReference>
<dbReference type="NCBIfam" id="TIGR00460">
    <property type="entry name" value="fmt"/>
    <property type="match status" value="1"/>
</dbReference>
<dbReference type="PANTHER" id="PTHR11138">
    <property type="entry name" value="METHIONYL-TRNA FORMYLTRANSFERASE"/>
    <property type="match status" value="1"/>
</dbReference>
<dbReference type="PANTHER" id="PTHR11138:SF5">
    <property type="entry name" value="METHIONYL-TRNA FORMYLTRANSFERASE, MITOCHONDRIAL"/>
    <property type="match status" value="1"/>
</dbReference>
<dbReference type="Pfam" id="PF02911">
    <property type="entry name" value="Formyl_trans_C"/>
    <property type="match status" value="1"/>
</dbReference>
<dbReference type="Pfam" id="PF00551">
    <property type="entry name" value="Formyl_trans_N"/>
    <property type="match status" value="1"/>
</dbReference>
<dbReference type="SUPFAM" id="SSF50486">
    <property type="entry name" value="FMT C-terminal domain-like"/>
    <property type="match status" value="1"/>
</dbReference>
<dbReference type="SUPFAM" id="SSF53328">
    <property type="entry name" value="Formyltransferase"/>
    <property type="match status" value="1"/>
</dbReference>
<feature type="chain" id="PRO_1000190014" description="Methionyl-tRNA formyltransferase">
    <location>
        <begin position="1"/>
        <end position="308"/>
    </location>
</feature>
<feature type="binding site" evidence="1">
    <location>
        <begin position="109"/>
        <end position="112"/>
    </location>
    <ligand>
        <name>(6S)-5,6,7,8-tetrahydrofolate</name>
        <dbReference type="ChEBI" id="CHEBI:57453"/>
    </ligand>
</feature>
<reference key="1">
    <citation type="journal article" date="2010" name="J. Bacteriol.">
        <title>The genetic basis of laboratory adaptation in Caulobacter crescentus.</title>
        <authorList>
            <person name="Marks M.E."/>
            <person name="Castro-Rojas C.M."/>
            <person name="Teiling C."/>
            <person name="Du L."/>
            <person name="Kapatral V."/>
            <person name="Walunas T.L."/>
            <person name="Crosson S."/>
        </authorList>
    </citation>
    <scope>NUCLEOTIDE SEQUENCE [LARGE SCALE GENOMIC DNA]</scope>
    <source>
        <strain>NA1000 / CB15N</strain>
    </source>
</reference>
<accession>B8GYF1</accession>
<evidence type="ECO:0000255" key="1">
    <source>
        <dbReference type="HAMAP-Rule" id="MF_00182"/>
    </source>
</evidence>
<organism>
    <name type="scientific">Caulobacter vibrioides (strain NA1000 / CB15N)</name>
    <name type="common">Caulobacter crescentus</name>
    <dbReference type="NCBI Taxonomy" id="565050"/>
    <lineage>
        <taxon>Bacteria</taxon>
        <taxon>Pseudomonadati</taxon>
        <taxon>Pseudomonadota</taxon>
        <taxon>Alphaproteobacteria</taxon>
        <taxon>Caulobacterales</taxon>
        <taxon>Caulobacteraceae</taxon>
        <taxon>Caulobacter</taxon>
    </lineage>
</organism>
<sequence length="308" mass="32531">MRIAFLGTPDFAVTCLAELVASGHEIVCVYSQPPAPRGRGQDLKPSPVHAFAEGLGLPVRTPVSMKTPEEIAAFQALDLDAAVVVAFGQILVKDVLEAPKHGCFNLHASLLPRWRGAAPIQRAIMAGDAVTGVQVMRMSEGLDEGPILMSQQVAIADDDTAASLHDKLAAVGARLLPVALAAIEREVVQETPQAEDGVTYAKKIKSAEARIDWTRPAAEIDRHIRGLSPFPGAWFEAPSEKGPVRVKALLSRVEAASGVAGTTLDDALLIACGEGSIRLLKAQREGKGVQDAQTFTRGFPIATGTVLA</sequence>
<comment type="function">
    <text evidence="1">Attaches a formyl group to the free amino group of methionyl-tRNA(fMet). The formyl group appears to play a dual role in the initiator identity of N-formylmethionyl-tRNA by promoting its recognition by IF2 and preventing the misappropriation of this tRNA by the elongation apparatus.</text>
</comment>
<comment type="catalytic activity">
    <reaction evidence="1">
        <text>L-methionyl-tRNA(fMet) + (6R)-10-formyltetrahydrofolate = N-formyl-L-methionyl-tRNA(fMet) + (6S)-5,6,7,8-tetrahydrofolate + H(+)</text>
        <dbReference type="Rhea" id="RHEA:24380"/>
        <dbReference type="Rhea" id="RHEA-COMP:9952"/>
        <dbReference type="Rhea" id="RHEA-COMP:9953"/>
        <dbReference type="ChEBI" id="CHEBI:15378"/>
        <dbReference type="ChEBI" id="CHEBI:57453"/>
        <dbReference type="ChEBI" id="CHEBI:78530"/>
        <dbReference type="ChEBI" id="CHEBI:78844"/>
        <dbReference type="ChEBI" id="CHEBI:195366"/>
        <dbReference type="EC" id="2.1.2.9"/>
    </reaction>
</comment>
<comment type="similarity">
    <text evidence="1">Belongs to the Fmt family.</text>
</comment>